<comment type="similarity">
    <text evidence="1">Belongs to the UPF0235 family.</text>
</comment>
<accession>B0B7V8</accession>
<evidence type="ECO:0000255" key="1">
    <source>
        <dbReference type="HAMAP-Rule" id="MF_00634"/>
    </source>
</evidence>
<protein>
    <recommendedName>
        <fullName evidence="1">UPF0235 protein CTL0644</fullName>
    </recommendedName>
</protein>
<dbReference type="EMBL" id="AM884176">
    <property type="protein sequence ID" value="CAP04084.1"/>
    <property type="molecule type" value="Genomic_DNA"/>
</dbReference>
<dbReference type="RefSeq" id="WP_009871740.1">
    <property type="nucleotide sequence ID" value="NC_010287.1"/>
</dbReference>
<dbReference type="RefSeq" id="YP_001654717.1">
    <property type="nucleotide sequence ID" value="NC_010287.1"/>
</dbReference>
<dbReference type="SMR" id="B0B7V8"/>
<dbReference type="KEGG" id="ctb:CTL0644"/>
<dbReference type="PATRIC" id="fig|471472.4.peg.694"/>
<dbReference type="HOGENOM" id="CLU_130694_6_2_0"/>
<dbReference type="Proteomes" id="UP001154402">
    <property type="component" value="Chromosome"/>
</dbReference>
<dbReference type="GO" id="GO:0005737">
    <property type="term" value="C:cytoplasm"/>
    <property type="evidence" value="ECO:0007669"/>
    <property type="project" value="TreeGrafter"/>
</dbReference>
<dbReference type="Gene3D" id="3.30.1200.10">
    <property type="entry name" value="YggU-like"/>
    <property type="match status" value="1"/>
</dbReference>
<dbReference type="HAMAP" id="MF_00634">
    <property type="entry name" value="UPF0235"/>
    <property type="match status" value="1"/>
</dbReference>
<dbReference type="InterPro" id="IPR003746">
    <property type="entry name" value="DUF167"/>
</dbReference>
<dbReference type="InterPro" id="IPR036591">
    <property type="entry name" value="YggU-like_sf"/>
</dbReference>
<dbReference type="NCBIfam" id="TIGR00251">
    <property type="entry name" value="DUF167 family protein"/>
    <property type="match status" value="1"/>
</dbReference>
<dbReference type="NCBIfam" id="NF001887">
    <property type="entry name" value="PRK00647.1"/>
    <property type="match status" value="1"/>
</dbReference>
<dbReference type="PANTHER" id="PTHR13420">
    <property type="entry name" value="UPF0235 PROTEIN C15ORF40"/>
    <property type="match status" value="1"/>
</dbReference>
<dbReference type="PANTHER" id="PTHR13420:SF7">
    <property type="entry name" value="UPF0235 PROTEIN C15ORF40"/>
    <property type="match status" value="1"/>
</dbReference>
<dbReference type="Pfam" id="PF02594">
    <property type="entry name" value="DUF167"/>
    <property type="match status" value="1"/>
</dbReference>
<dbReference type="SMART" id="SM01152">
    <property type="entry name" value="DUF167"/>
    <property type="match status" value="1"/>
</dbReference>
<dbReference type="SUPFAM" id="SSF69786">
    <property type="entry name" value="YggU-like"/>
    <property type="match status" value="1"/>
</dbReference>
<sequence length="115" mass="12867">MRFLLKLLSKEKENILLEGFWVLEVRVTTKARENRVVCLEDGILRVRVTEVPEKGKANDAVVALLANFLSIPKSDVTLIAGEASRRKKVLLPRSIKAFLLEQFPSESSSTTGKKS</sequence>
<name>Y644_CHLT2</name>
<proteinExistence type="inferred from homology"/>
<gene>
    <name type="ordered locus">CTL0644</name>
</gene>
<reference key="1">
    <citation type="journal article" date="2008" name="Genome Res.">
        <title>Chlamydia trachomatis: genome sequence analysis of lymphogranuloma venereum isolates.</title>
        <authorList>
            <person name="Thomson N.R."/>
            <person name="Holden M.T.G."/>
            <person name="Carder C."/>
            <person name="Lennard N."/>
            <person name="Lockey S.J."/>
            <person name="Marsh P."/>
            <person name="Skipp P."/>
            <person name="O'Connor C.D."/>
            <person name="Goodhead I."/>
            <person name="Norbertzcak H."/>
            <person name="Harris B."/>
            <person name="Ormond D."/>
            <person name="Rance R."/>
            <person name="Quail M.A."/>
            <person name="Parkhill J."/>
            <person name="Stephens R.S."/>
            <person name="Clarke I.N."/>
        </authorList>
    </citation>
    <scope>NUCLEOTIDE SEQUENCE [LARGE SCALE GENOMIC DNA]</scope>
    <source>
        <strain>ATCC VR-902B / DSM 19102 / 434/Bu</strain>
    </source>
</reference>
<feature type="chain" id="PRO_1000130674" description="UPF0235 protein CTL0644">
    <location>
        <begin position="1"/>
        <end position="115"/>
    </location>
</feature>
<organism>
    <name type="scientific">Chlamydia trachomatis serovar L2 (strain ATCC VR-902B / DSM 19102 / 434/Bu)</name>
    <dbReference type="NCBI Taxonomy" id="471472"/>
    <lineage>
        <taxon>Bacteria</taxon>
        <taxon>Pseudomonadati</taxon>
        <taxon>Chlamydiota</taxon>
        <taxon>Chlamydiia</taxon>
        <taxon>Chlamydiales</taxon>
        <taxon>Chlamydiaceae</taxon>
        <taxon>Chlamydia/Chlamydophila group</taxon>
        <taxon>Chlamydia</taxon>
    </lineage>
</organism>